<sequence length="116" mass="13247">MANEVRVARLESLIKDVINNALANEINDKIAKLARVTAVRLSNDLSVAKIFLDAHKRESMLKVLENVNKVSGLLRSKLAAEWTSYKVPELRFVIDETIDYANHIDELFKKIKQQEN</sequence>
<dbReference type="EMBL" id="CP000942">
    <property type="protein sequence ID" value="ACA32982.1"/>
    <property type="molecule type" value="Genomic_DNA"/>
</dbReference>
<dbReference type="RefSeq" id="WP_006688602.1">
    <property type="nucleotide sequence ID" value="NC_010503.1"/>
</dbReference>
<dbReference type="SMR" id="B1AIV9"/>
<dbReference type="GeneID" id="29672463"/>
<dbReference type="KEGG" id="upa:UPA3_0336"/>
<dbReference type="HOGENOM" id="CLU_089475_3_2_14"/>
<dbReference type="Proteomes" id="UP000002162">
    <property type="component" value="Chromosome"/>
</dbReference>
<dbReference type="GO" id="GO:0005829">
    <property type="term" value="C:cytosol"/>
    <property type="evidence" value="ECO:0007669"/>
    <property type="project" value="TreeGrafter"/>
</dbReference>
<dbReference type="GO" id="GO:0043024">
    <property type="term" value="F:ribosomal small subunit binding"/>
    <property type="evidence" value="ECO:0007669"/>
    <property type="project" value="TreeGrafter"/>
</dbReference>
<dbReference type="GO" id="GO:0030490">
    <property type="term" value="P:maturation of SSU-rRNA"/>
    <property type="evidence" value="ECO:0007669"/>
    <property type="project" value="UniProtKB-UniRule"/>
</dbReference>
<dbReference type="Gene3D" id="3.30.300.20">
    <property type="match status" value="1"/>
</dbReference>
<dbReference type="HAMAP" id="MF_00003">
    <property type="entry name" value="RbfA"/>
    <property type="match status" value="1"/>
</dbReference>
<dbReference type="InterPro" id="IPR015946">
    <property type="entry name" value="KH_dom-like_a/b"/>
</dbReference>
<dbReference type="InterPro" id="IPR000238">
    <property type="entry name" value="RbfA"/>
</dbReference>
<dbReference type="InterPro" id="IPR023799">
    <property type="entry name" value="RbfA_dom_sf"/>
</dbReference>
<dbReference type="NCBIfam" id="TIGR00082">
    <property type="entry name" value="rbfA"/>
    <property type="match status" value="1"/>
</dbReference>
<dbReference type="PANTHER" id="PTHR33515">
    <property type="entry name" value="RIBOSOME-BINDING FACTOR A, CHLOROPLASTIC-RELATED"/>
    <property type="match status" value="1"/>
</dbReference>
<dbReference type="PANTHER" id="PTHR33515:SF1">
    <property type="entry name" value="RIBOSOME-BINDING FACTOR A, CHLOROPLASTIC-RELATED"/>
    <property type="match status" value="1"/>
</dbReference>
<dbReference type="Pfam" id="PF02033">
    <property type="entry name" value="RBFA"/>
    <property type="match status" value="1"/>
</dbReference>
<dbReference type="SUPFAM" id="SSF89919">
    <property type="entry name" value="Ribosome-binding factor A, RbfA"/>
    <property type="match status" value="1"/>
</dbReference>
<proteinExistence type="inferred from homology"/>
<evidence type="ECO:0000255" key="1">
    <source>
        <dbReference type="HAMAP-Rule" id="MF_00003"/>
    </source>
</evidence>
<keyword id="KW-0963">Cytoplasm</keyword>
<keyword id="KW-0690">Ribosome biogenesis</keyword>
<comment type="function">
    <text evidence="1">One of several proteins that assist in the late maturation steps of the functional core of the 30S ribosomal subunit. Associates with free 30S ribosomal subunits (but not with 30S subunits that are part of 70S ribosomes or polysomes). Required for efficient processing of 16S rRNA. May interact with the 5'-terminal helix region of 16S rRNA.</text>
</comment>
<comment type="subunit">
    <text evidence="1">Monomer. Binds 30S ribosomal subunits, but not 50S ribosomal subunits or 70S ribosomes.</text>
</comment>
<comment type="subcellular location">
    <subcellularLocation>
        <location evidence="1">Cytoplasm</location>
    </subcellularLocation>
</comment>
<comment type="similarity">
    <text evidence="1">Belongs to the RbfA family.</text>
</comment>
<organism>
    <name type="scientific">Ureaplasma parvum serovar 3 (strain ATCC 27815 / 27 / NCTC 11736)</name>
    <dbReference type="NCBI Taxonomy" id="505682"/>
    <lineage>
        <taxon>Bacteria</taxon>
        <taxon>Bacillati</taxon>
        <taxon>Mycoplasmatota</taxon>
        <taxon>Mycoplasmoidales</taxon>
        <taxon>Mycoplasmoidaceae</taxon>
        <taxon>Ureaplasma</taxon>
    </lineage>
</organism>
<reference key="1">
    <citation type="submission" date="2008-02" db="EMBL/GenBank/DDBJ databases">
        <title>Genome sequence of Ureaplasma parvum serovar 3.</title>
        <authorList>
            <person name="Methe B.A."/>
            <person name="Glass J."/>
            <person name="Waites K."/>
            <person name="Shrivastava S."/>
        </authorList>
    </citation>
    <scope>NUCLEOTIDE SEQUENCE [LARGE SCALE GENOMIC DNA]</scope>
    <source>
        <strain>ATCC 27815 / 27 / NCTC 11736</strain>
    </source>
</reference>
<accession>B1AIV9</accession>
<gene>
    <name evidence="1" type="primary">rbfA</name>
    <name type="ordered locus">UPA3_0336</name>
</gene>
<feature type="chain" id="PRO_1000073785" description="Ribosome-binding factor A">
    <location>
        <begin position="1"/>
        <end position="116"/>
    </location>
</feature>
<protein>
    <recommendedName>
        <fullName evidence="1">Ribosome-binding factor A</fullName>
    </recommendedName>
</protein>
<name>RBFA_UREP2</name>